<name>PDXJ_CYTH3</name>
<proteinExistence type="inferred from homology"/>
<protein>
    <recommendedName>
        <fullName evidence="1">Pyridoxine 5'-phosphate synthase</fullName>
        <shortName evidence="1">PNP synthase</shortName>
        <ecNumber evidence="1">2.6.99.2</ecNumber>
    </recommendedName>
</protein>
<gene>
    <name evidence="1" type="primary">pdxJ</name>
    <name type="ordered locus">CHU_3403</name>
</gene>
<dbReference type="EC" id="2.6.99.2" evidence="1"/>
<dbReference type="EMBL" id="CP000383">
    <property type="protein sequence ID" value="ABG60639.1"/>
    <property type="molecule type" value="Genomic_DNA"/>
</dbReference>
<dbReference type="RefSeq" id="WP_011586746.1">
    <property type="nucleotide sequence ID" value="NC_008255.1"/>
</dbReference>
<dbReference type="SMR" id="Q11PM4"/>
<dbReference type="STRING" id="269798.CHU_3403"/>
<dbReference type="KEGG" id="chu:CHU_3403"/>
<dbReference type="eggNOG" id="COG0854">
    <property type="taxonomic scope" value="Bacteria"/>
</dbReference>
<dbReference type="HOGENOM" id="CLU_074563_1_0_10"/>
<dbReference type="OrthoDB" id="9806590at2"/>
<dbReference type="UniPathway" id="UPA00244">
    <property type="reaction ID" value="UER00313"/>
</dbReference>
<dbReference type="Proteomes" id="UP000001822">
    <property type="component" value="Chromosome"/>
</dbReference>
<dbReference type="GO" id="GO:0005829">
    <property type="term" value="C:cytosol"/>
    <property type="evidence" value="ECO:0007669"/>
    <property type="project" value="TreeGrafter"/>
</dbReference>
<dbReference type="GO" id="GO:0033856">
    <property type="term" value="F:pyridoxine 5'-phosphate synthase activity"/>
    <property type="evidence" value="ECO:0007669"/>
    <property type="project" value="UniProtKB-EC"/>
</dbReference>
<dbReference type="GO" id="GO:0008615">
    <property type="term" value="P:pyridoxine biosynthetic process"/>
    <property type="evidence" value="ECO:0007669"/>
    <property type="project" value="UniProtKB-UniRule"/>
</dbReference>
<dbReference type="CDD" id="cd00003">
    <property type="entry name" value="PNPsynthase"/>
    <property type="match status" value="1"/>
</dbReference>
<dbReference type="FunFam" id="3.20.20.70:FF:000150">
    <property type="entry name" value="Pyridoxine 5'-phosphate synthase"/>
    <property type="match status" value="1"/>
</dbReference>
<dbReference type="Gene3D" id="3.20.20.70">
    <property type="entry name" value="Aldolase class I"/>
    <property type="match status" value="1"/>
</dbReference>
<dbReference type="HAMAP" id="MF_00279">
    <property type="entry name" value="PdxJ"/>
    <property type="match status" value="1"/>
</dbReference>
<dbReference type="InterPro" id="IPR013785">
    <property type="entry name" value="Aldolase_TIM"/>
</dbReference>
<dbReference type="InterPro" id="IPR004569">
    <property type="entry name" value="PyrdxlP_synth_PdxJ"/>
</dbReference>
<dbReference type="InterPro" id="IPR036130">
    <property type="entry name" value="Pyridoxine-5'_phos_synth"/>
</dbReference>
<dbReference type="NCBIfam" id="TIGR00559">
    <property type="entry name" value="pdxJ"/>
    <property type="match status" value="1"/>
</dbReference>
<dbReference type="NCBIfam" id="NF003625">
    <property type="entry name" value="PRK05265.1-3"/>
    <property type="match status" value="1"/>
</dbReference>
<dbReference type="NCBIfam" id="NF003626">
    <property type="entry name" value="PRK05265.1-4"/>
    <property type="match status" value="1"/>
</dbReference>
<dbReference type="PANTHER" id="PTHR30456">
    <property type="entry name" value="PYRIDOXINE 5'-PHOSPHATE SYNTHASE"/>
    <property type="match status" value="1"/>
</dbReference>
<dbReference type="PANTHER" id="PTHR30456:SF0">
    <property type="entry name" value="PYRIDOXINE 5'-PHOSPHATE SYNTHASE"/>
    <property type="match status" value="1"/>
</dbReference>
<dbReference type="Pfam" id="PF03740">
    <property type="entry name" value="PdxJ"/>
    <property type="match status" value="1"/>
</dbReference>
<dbReference type="SUPFAM" id="SSF63892">
    <property type="entry name" value="Pyridoxine 5'-phosphate synthase"/>
    <property type="match status" value="1"/>
</dbReference>
<organism>
    <name type="scientific">Cytophaga hutchinsonii (strain ATCC 33406 / DSM 1761 / CIP 103989 / NBRC 15051 / NCIMB 9469 / D465)</name>
    <dbReference type="NCBI Taxonomy" id="269798"/>
    <lineage>
        <taxon>Bacteria</taxon>
        <taxon>Pseudomonadati</taxon>
        <taxon>Bacteroidota</taxon>
        <taxon>Cytophagia</taxon>
        <taxon>Cytophagales</taxon>
        <taxon>Cytophagaceae</taxon>
        <taxon>Cytophaga</taxon>
    </lineage>
</organism>
<reference key="1">
    <citation type="journal article" date="2007" name="Appl. Environ. Microbiol.">
        <title>Genome sequence of the cellulolytic gliding bacterium Cytophaga hutchinsonii.</title>
        <authorList>
            <person name="Xie G."/>
            <person name="Bruce D.C."/>
            <person name="Challacombe J.F."/>
            <person name="Chertkov O."/>
            <person name="Detter J.C."/>
            <person name="Gilna P."/>
            <person name="Han C.S."/>
            <person name="Lucas S."/>
            <person name="Misra M."/>
            <person name="Myers G.L."/>
            <person name="Richardson P."/>
            <person name="Tapia R."/>
            <person name="Thayer N."/>
            <person name="Thompson L.S."/>
            <person name="Brettin T.S."/>
            <person name="Henrissat B."/>
            <person name="Wilson D.B."/>
            <person name="McBride M.J."/>
        </authorList>
    </citation>
    <scope>NUCLEOTIDE SEQUENCE [LARGE SCALE GENOMIC DNA]</scope>
    <source>
        <strain>ATCC 33406 / DSM 1761 / JCM 20678 / CIP 103989 / IAM 12607 / NBRC 15051 / NCIMB 9469 / D465</strain>
    </source>
</reference>
<accession>Q11PM4</accession>
<keyword id="KW-0963">Cytoplasm</keyword>
<keyword id="KW-0664">Pyridoxine biosynthesis</keyword>
<keyword id="KW-1185">Reference proteome</keyword>
<keyword id="KW-0808">Transferase</keyword>
<comment type="function">
    <text evidence="1">Catalyzes the complicated ring closure reaction between the two acyclic compounds 1-deoxy-D-xylulose-5-phosphate (DXP) and 3-amino-2-oxopropyl phosphate (1-amino-acetone-3-phosphate or AAP) to form pyridoxine 5'-phosphate (PNP) and inorganic phosphate.</text>
</comment>
<comment type="catalytic activity">
    <reaction evidence="1">
        <text>3-amino-2-oxopropyl phosphate + 1-deoxy-D-xylulose 5-phosphate = pyridoxine 5'-phosphate + phosphate + 2 H2O + H(+)</text>
        <dbReference type="Rhea" id="RHEA:15265"/>
        <dbReference type="ChEBI" id="CHEBI:15377"/>
        <dbReference type="ChEBI" id="CHEBI:15378"/>
        <dbReference type="ChEBI" id="CHEBI:43474"/>
        <dbReference type="ChEBI" id="CHEBI:57279"/>
        <dbReference type="ChEBI" id="CHEBI:57792"/>
        <dbReference type="ChEBI" id="CHEBI:58589"/>
        <dbReference type="EC" id="2.6.99.2"/>
    </reaction>
</comment>
<comment type="pathway">
    <text evidence="1">Cofactor biosynthesis; pyridoxine 5'-phosphate biosynthesis; pyridoxine 5'-phosphate from D-erythrose 4-phosphate: step 5/5.</text>
</comment>
<comment type="subunit">
    <text evidence="1">Homooctamer; tetramer of dimers.</text>
</comment>
<comment type="subcellular location">
    <subcellularLocation>
        <location evidence="1">Cytoplasm</location>
    </subcellularLocation>
</comment>
<comment type="similarity">
    <text evidence="1">Belongs to the PNP synthase family.</text>
</comment>
<evidence type="ECO:0000255" key="1">
    <source>
        <dbReference type="HAMAP-Rule" id="MF_00279"/>
    </source>
</evidence>
<feature type="chain" id="PRO_1000022370" description="Pyridoxine 5'-phosphate synthase">
    <location>
        <begin position="1"/>
        <end position="238"/>
    </location>
</feature>
<feature type="active site" description="Proton acceptor" evidence="1">
    <location>
        <position position="43"/>
    </location>
</feature>
<feature type="active site" description="Proton acceptor" evidence="1">
    <location>
        <position position="70"/>
    </location>
</feature>
<feature type="active site" description="Proton donor" evidence="1">
    <location>
        <position position="190"/>
    </location>
</feature>
<feature type="binding site" evidence="1">
    <location>
        <position position="7"/>
    </location>
    <ligand>
        <name>3-amino-2-oxopropyl phosphate</name>
        <dbReference type="ChEBI" id="CHEBI:57279"/>
    </ligand>
</feature>
<feature type="binding site" evidence="1">
    <location>
        <position position="18"/>
    </location>
    <ligand>
        <name>3-amino-2-oxopropyl phosphate</name>
        <dbReference type="ChEBI" id="CHEBI:57279"/>
    </ligand>
</feature>
<feature type="binding site" evidence="1">
    <location>
        <position position="45"/>
    </location>
    <ligand>
        <name>1-deoxy-D-xylulose 5-phosphate</name>
        <dbReference type="ChEBI" id="CHEBI:57792"/>
    </ligand>
</feature>
<feature type="binding site" evidence="1">
    <location>
        <position position="50"/>
    </location>
    <ligand>
        <name>1-deoxy-D-xylulose 5-phosphate</name>
        <dbReference type="ChEBI" id="CHEBI:57792"/>
    </ligand>
</feature>
<feature type="binding site" evidence="1">
    <location>
        <position position="100"/>
    </location>
    <ligand>
        <name>1-deoxy-D-xylulose 5-phosphate</name>
        <dbReference type="ChEBI" id="CHEBI:57792"/>
    </ligand>
</feature>
<feature type="binding site" evidence="1">
    <location>
        <position position="191"/>
    </location>
    <ligand>
        <name>3-amino-2-oxopropyl phosphate</name>
        <dbReference type="ChEBI" id="CHEBI:57279"/>
    </ligand>
</feature>
<feature type="binding site" evidence="1">
    <location>
        <begin position="213"/>
        <end position="214"/>
    </location>
    <ligand>
        <name>3-amino-2-oxopropyl phosphate</name>
        <dbReference type="ChEBI" id="CHEBI:57279"/>
    </ligand>
</feature>
<feature type="site" description="Transition state stabilizer" evidence="1">
    <location>
        <position position="151"/>
    </location>
</feature>
<sequence>MTRLSVNINKIATIRNARGGNNPDLLKVALDCERFGAEGITIHPRPDERHIRYQDAYDLKKIVTTEFNIEGNPEGEFIALVENIKPDQVTLVPDAVNAITSNAGWDTITHQSFLTEIISNFKKAGIRVSVFVDPVTAMVEGAAKAGADRVELYTEPYATSFHSNKEAAIKEYIEAAAAAKSLGLGINAGHDLDLFNLNYLKKNIPFLDEVSIGHALICDALYYGLENTIQLYLRELKK</sequence>